<organism>
    <name type="scientific">Ehrlichia ruminantium (strain Gardel)</name>
    <dbReference type="NCBI Taxonomy" id="302409"/>
    <lineage>
        <taxon>Bacteria</taxon>
        <taxon>Pseudomonadati</taxon>
        <taxon>Pseudomonadota</taxon>
        <taxon>Alphaproteobacteria</taxon>
        <taxon>Rickettsiales</taxon>
        <taxon>Anaplasmataceae</taxon>
        <taxon>Ehrlichia</taxon>
    </lineage>
</organism>
<protein>
    <recommendedName>
        <fullName evidence="1">Large ribosomal subunit protein uL15</fullName>
    </recommendedName>
    <alternativeName>
        <fullName evidence="2">50S ribosomal protein L15</fullName>
    </alternativeName>
</protein>
<keyword id="KW-0687">Ribonucleoprotein</keyword>
<keyword id="KW-0689">Ribosomal protein</keyword>
<keyword id="KW-0694">RNA-binding</keyword>
<keyword id="KW-0699">rRNA-binding</keyword>
<comment type="function">
    <text evidence="1">Binds to the 23S rRNA.</text>
</comment>
<comment type="subunit">
    <text evidence="1">Part of the 50S ribosomal subunit.</text>
</comment>
<comment type="similarity">
    <text evidence="1">Belongs to the universal ribosomal protein uL15 family.</text>
</comment>
<accession>Q5FFR6</accession>
<name>RL15_EHRRG</name>
<evidence type="ECO:0000255" key="1">
    <source>
        <dbReference type="HAMAP-Rule" id="MF_01341"/>
    </source>
</evidence>
<evidence type="ECO:0000305" key="2"/>
<sequence>MDVVMKLNNIFSGLPKKKKSKVLGRGIGCGKGKTSGRGHKGQKARSGVSINGFEGGQQSIFTRLPKRGFNSLPKNKYSIINVSLIQRLIDSGKIDNVSAITKEVLYNLGVISSVKQKIKILGDGKLNTTVCIEYDFISKSAKSQVTLLNSLSDSESK</sequence>
<gene>
    <name evidence="1" type="primary">rplO</name>
    <name type="ordered locus">ERGA_CDS_06110</name>
</gene>
<feature type="chain" id="PRO_0000251510" description="Large ribosomal subunit protein uL15">
    <location>
        <begin position="1"/>
        <end position="157"/>
    </location>
</feature>
<dbReference type="EMBL" id="CR925677">
    <property type="protein sequence ID" value="CAI28063.1"/>
    <property type="molecule type" value="Genomic_DNA"/>
</dbReference>
<dbReference type="RefSeq" id="WP_011255713.1">
    <property type="nucleotide sequence ID" value="NC_006831.1"/>
</dbReference>
<dbReference type="SMR" id="Q5FFR6"/>
<dbReference type="KEGG" id="erg:ERGA_CDS_06110"/>
<dbReference type="HOGENOM" id="CLU_055188_4_0_5"/>
<dbReference type="OrthoDB" id="9810293at2"/>
<dbReference type="Proteomes" id="UP000000533">
    <property type="component" value="Chromosome"/>
</dbReference>
<dbReference type="GO" id="GO:0015934">
    <property type="term" value="C:large ribosomal subunit"/>
    <property type="evidence" value="ECO:0007669"/>
    <property type="project" value="InterPro"/>
</dbReference>
<dbReference type="GO" id="GO:0019843">
    <property type="term" value="F:rRNA binding"/>
    <property type="evidence" value="ECO:0007669"/>
    <property type="project" value="UniProtKB-UniRule"/>
</dbReference>
<dbReference type="GO" id="GO:0003735">
    <property type="term" value="F:structural constituent of ribosome"/>
    <property type="evidence" value="ECO:0007669"/>
    <property type="project" value="InterPro"/>
</dbReference>
<dbReference type="GO" id="GO:0006412">
    <property type="term" value="P:translation"/>
    <property type="evidence" value="ECO:0007669"/>
    <property type="project" value="UniProtKB-UniRule"/>
</dbReference>
<dbReference type="Gene3D" id="3.100.10.10">
    <property type="match status" value="1"/>
</dbReference>
<dbReference type="HAMAP" id="MF_01341">
    <property type="entry name" value="Ribosomal_uL15"/>
    <property type="match status" value="1"/>
</dbReference>
<dbReference type="InterPro" id="IPR030878">
    <property type="entry name" value="Ribosomal_uL15"/>
</dbReference>
<dbReference type="InterPro" id="IPR021131">
    <property type="entry name" value="Ribosomal_uL15/eL18"/>
</dbReference>
<dbReference type="InterPro" id="IPR036227">
    <property type="entry name" value="Ribosomal_uL15/eL18_sf"/>
</dbReference>
<dbReference type="InterPro" id="IPR005749">
    <property type="entry name" value="Ribosomal_uL15_bac-type"/>
</dbReference>
<dbReference type="NCBIfam" id="TIGR01071">
    <property type="entry name" value="rplO_bact"/>
    <property type="match status" value="1"/>
</dbReference>
<dbReference type="PANTHER" id="PTHR12934">
    <property type="entry name" value="50S RIBOSOMAL PROTEIN L15"/>
    <property type="match status" value="1"/>
</dbReference>
<dbReference type="PANTHER" id="PTHR12934:SF11">
    <property type="entry name" value="LARGE RIBOSOMAL SUBUNIT PROTEIN UL15M"/>
    <property type="match status" value="1"/>
</dbReference>
<dbReference type="Pfam" id="PF00828">
    <property type="entry name" value="Ribosomal_L27A"/>
    <property type="match status" value="1"/>
</dbReference>
<dbReference type="SUPFAM" id="SSF52080">
    <property type="entry name" value="Ribosomal proteins L15p and L18e"/>
    <property type="match status" value="1"/>
</dbReference>
<reference key="1">
    <citation type="journal article" date="2006" name="J. Bacteriol.">
        <title>Comparative genomic analysis of three strains of Ehrlichia ruminantium reveals an active process of genome size plasticity.</title>
        <authorList>
            <person name="Frutos R."/>
            <person name="Viari A."/>
            <person name="Ferraz C."/>
            <person name="Morgat A."/>
            <person name="Eychenie S."/>
            <person name="Kandassamy Y."/>
            <person name="Chantal I."/>
            <person name="Bensaid A."/>
            <person name="Coissac E."/>
            <person name="Vachiery N."/>
            <person name="Demaille J."/>
            <person name="Martinez D."/>
        </authorList>
    </citation>
    <scope>NUCLEOTIDE SEQUENCE [LARGE SCALE GENOMIC DNA]</scope>
    <source>
        <strain>Gardel</strain>
    </source>
</reference>
<proteinExistence type="inferred from homology"/>